<feature type="chain" id="PRO_0000431495" description="Global nitrogen regulator NrpRI">
    <location>
        <begin position="1"/>
        <end position="323"/>
    </location>
</feature>
<feature type="region of interest" description="Winged helix-turn-helix" evidence="4">
    <location>
        <begin position="11"/>
        <end position="76"/>
    </location>
</feature>
<feature type="region of interest" description="NRD" evidence="4">
    <location>
        <begin position="86"/>
        <end position="323"/>
    </location>
</feature>
<dbReference type="EMBL" id="AE008384">
    <property type="protein sequence ID" value="AAM30781.1"/>
    <property type="molecule type" value="Genomic_DNA"/>
</dbReference>
<dbReference type="RefSeq" id="WP_011033034.1">
    <property type="nucleotide sequence ID" value="NC_003901.1"/>
</dbReference>
<dbReference type="SMR" id="Q8PXY1"/>
<dbReference type="IntAct" id="Q8PXY1">
    <property type="interactions" value="1"/>
</dbReference>
<dbReference type="MINT" id="Q8PXY1"/>
<dbReference type="GeneID" id="66137486"/>
<dbReference type="KEGG" id="mma:MM_1085"/>
<dbReference type="PATRIC" id="fig|192952.21.peg.1272"/>
<dbReference type="eggNOG" id="arCOG02710">
    <property type="taxonomic scope" value="Archaea"/>
</dbReference>
<dbReference type="HOGENOM" id="CLU_073525_0_0_2"/>
<dbReference type="Proteomes" id="UP000000595">
    <property type="component" value="Chromosome"/>
</dbReference>
<dbReference type="GO" id="GO:0003677">
    <property type="term" value="F:DNA binding"/>
    <property type="evidence" value="ECO:0007669"/>
    <property type="project" value="UniProtKB-KW"/>
</dbReference>
<dbReference type="Gene3D" id="3.30.70.1360">
    <property type="entry name" value="mj0159-like"/>
    <property type="match status" value="2"/>
</dbReference>
<dbReference type="InterPro" id="IPR002846">
    <property type="entry name" value="NRD"/>
</dbReference>
<dbReference type="InterPro" id="IPR038982">
    <property type="entry name" value="NrpR"/>
</dbReference>
<dbReference type="InterPro" id="IPR036984">
    <property type="entry name" value="NrpR_dom_sf"/>
</dbReference>
<dbReference type="InterPro" id="IPR013668">
    <property type="entry name" value="RNase_R_HTH_12"/>
</dbReference>
<dbReference type="InterPro" id="IPR036390">
    <property type="entry name" value="WH_DNA-bd_sf"/>
</dbReference>
<dbReference type="PANTHER" id="PTHR41964">
    <property type="entry name" value="GLOBAL NITROGEN REGULATOR NRPR"/>
    <property type="match status" value="1"/>
</dbReference>
<dbReference type="PANTHER" id="PTHR41964:SF1">
    <property type="entry name" value="GLOBAL NITROGEN REGULATOR NRPR"/>
    <property type="match status" value="1"/>
</dbReference>
<dbReference type="Pfam" id="PF08461">
    <property type="entry name" value="HTH_12"/>
    <property type="match status" value="1"/>
</dbReference>
<dbReference type="Pfam" id="PF01995">
    <property type="entry name" value="NRD1_2"/>
    <property type="match status" value="1"/>
</dbReference>
<dbReference type="SUPFAM" id="SSF46785">
    <property type="entry name" value="Winged helix' DNA-binding domain"/>
    <property type="match status" value="1"/>
</dbReference>
<sequence length="323" mass="35770">MMDPQIERKLIEIMRVIHESDKPIGARAIADELNNRGYDIGERAVRYHLRILDERGFTRKHGYAGRTLTDLGENEMNDALIGDRFGFVISRIEEMAFRTTYNPETDKGDVVVNISYFDKDDFETVIELISYTAHAGYMISPRVRIFEEDSLEMSLPPGKIGIATVCSVTFDGLLLKAGIPVEPAYGGILQIENKKPARFLDLISYSGTSIDPIKIFMNRTPTSVLEVLEKGEGKILANMRQINSSAYEMTGKILKKAEKVGLAGCITLGEIDEYLLGAPVETGKFGAAVVGGINGICALEETGIEIETNPISTMLDYQTMKEI</sequence>
<proteinExistence type="evidence at protein level"/>
<accession>Q8PXY1</accession>
<gene>
    <name evidence="3" type="primary">nrpRI</name>
    <name evidence="5" type="ordered locus">MM_1085</name>
</gene>
<evidence type="ECO:0000269" key="1">
    <source>
    </source>
</evidence>
<evidence type="ECO:0000269" key="2">
    <source>
    </source>
</evidence>
<evidence type="ECO:0000303" key="3">
    <source>
    </source>
</evidence>
<evidence type="ECO:0000305" key="4"/>
<evidence type="ECO:0000312" key="5">
    <source>
        <dbReference type="EMBL" id="AAM30781.1"/>
    </source>
</evidence>
<reference key="1">
    <citation type="journal article" date="2002" name="J. Mol. Microbiol. Biotechnol.">
        <title>The genome of Methanosarcina mazei: evidence for lateral gene transfer between Bacteria and Archaea.</title>
        <authorList>
            <person name="Deppenmeier U."/>
            <person name="Johann A."/>
            <person name="Hartsch T."/>
            <person name="Merkl R."/>
            <person name="Schmitz R.A."/>
            <person name="Martinez-Arias R."/>
            <person name="Henne A."/>
            <person name="Wiezer A."/>
            <person name="Baeumer S."/>
            <person name="Jacobi C."/>
            <person name="Brueggemann H."/>
            <person name="Lienard T."/>
            <person name="Christmann A."/>
            <person name="Boemecke M."/>
            <person name="Steckel S."/>
            <person name="Bhattacharyya A."/>
            <person name="Lykidis A."/>
            <person name="Overbeek R."/>
            <person name="Klenk H.-P."/>
            <person name="Gunsalus R.P."/>
            <person name="Fritz H.-J."/>
            <person name="Gottschalk G."/>
        </authorList>
    </citation>
    <scope>NUCLEOTIDE SEQUENCE [LARGE SCALE GENOMIC DNA]</scope>
    <source>
        <strain>ATCC BAA-159 / DSM 3647 / Goe1 / Go1 / JCM 11833 / OCM 88</strain>
    </source>
</reference>
<reference key="2">
    <citation type="journal article" date="2008" name="Arch. Microbiol.">
        <title>Insights into the NrpR regulon in Methanosarcina mazei Goe1.</title>
        <authorList>
            <person name="Weidenbach K."/>
            <person name="Ehlers C."/>
            <person name="Kock J."/>
            <person name="Ehrenreich A."/>
            <person name="Schmitz R.A."/>
        </authorList>
    </citation>
    <scope>FUNCTION</scope>
    <scope>DISRUPTION PHENOTYPE</scope>
    <scope>GENE NAME</scope>
    <source>
        <strain>ATCC BAA-159 / DSM 3647 / Goe1 / Go1 / JCM 11833 / OCM 88</strain>
    </source>
</reference>
<reference key="3">
    <citation type="journal article" date="2010" name="FEBS J.">
        <title>NrpRII mediates contacts between NrpRI and general transcription factors in the archaeon Methanosarcina mazei Goe1.</title>
        <authorList>
            <person name="Weidenbach K."/>
            <person name="Ehlers C."/>
            <person name="Kock J."/>
            <person name="Schmitz R.A."/>
        </authorList>
    </citation>
    <scope>FUNCTION</scope>
    <scope>ACTIVITY REGULATION</scope>
    <scope>SUBUNIT</scope>
    <scope>INTERACTION WITH NRPRII</scope>
    <source>
        <strain>ATCC BAA-159 / DSM 3647 / Goe1 / Go1 / JCM 11833 / OCM 88</strain>
    </source>
</reference>
<name>NRPR1_METMA</name>
<organism>
    <name type="scientific">Methanosarcina mazei (strain ATCC BAA-159 / DSM 3647 / Goe1 / Go1 / JCM 11833 / OCM 88)</name>
    <name type="common">Methanosarcina frisia</name>
    <dbReference type="NCBI Taxonomy" id="192952"/>
    <lineage>
        <taxon>Archaea</taxon>
        <taxon>Methanobacteriati</taxon>
        <taxon>Methanobacteriota</taxon>
        <taxon>Stenosarchaea group</taxon>
        <taxon>Methanomicrobia</taxon>
        <taxon>Methanosarcinales</taxon>
        <taxon>Methanosarcinaceae</taxon>
        <taxon>Methanosarcina</taxon>
    </lineage>
</organism>
<comment type="function">
    <text evidence="1 2">Plays a major role in nitrogen regulation. Under nitrogen sufficiency, binds to the nifH and the glnk1 promoters, leading to repression of the transcription of the genes.</text>
</comment>
<comment type="activity regulation">
    <text evidence="2">Under nitrogen limitation, binding of 2-oxoglutarate to the NrpRI/NrpRII complex decreases the binding affinity of NrpRI to DNA as well as the binding affinity of NrpRII to TBP and TFB, which leads to removal of the complex from the operator, RNA polymerase recruitment and initiation of transcription.</text>
</comment>
<comment type="subunit">
    <text evidence="2">Forms a complex with NrpRII and the general archaeal transcription factors TBP and TFB. Interacts directly with NrpRII.</text>
</comment>
<comment type="interaction">
    <interactant intactId="EBI-8377032">
        <id>Q8PXY1</id>
    </interactant>
    <interactant intactId="EBI-8377070">
        <id>Q8PVJ4</id>
        <label>nrpRII</label>
    </interactant>
    <organismsDiffer>false</organismsDiffer>
    <experiments>3</experiments>
</comment>
<comment type="disruption phenotype">
    <text evidence="1">Disruption results in significantly increased transcript levels of genes involved in nitrogen fixation or nitrogen assimilation though growing under nitrogen sufficiency. It also leads to a significant reduction of the lag-phase after a shift from nitrogen sufficiency to nitrogen limitation.</text>
</comment>
<comment type="similarity">
    <text evidence="4">Belongs to the NrpR family.</text>
</comment>
<keyword id="KW-0238">DNA-binding</keyword>
<keyword id="KW-0678">Repressor</keyword>
<keyword id="KW-0804">Transcription</keyword>
<keyword id="KW-0805">Transcription regulation</keyword>
<protein>
    <recommendedName>
        <fullName evidence="4">Global nitrogen regulator NrpRI</fullName>
    </recommendedName>
    <alternativeName>
        <fullName evidence="4">Nitrogen regulatory protein R I</fullName>
    </alternativeName>
</protein>